<name>LAMB1_AERS4</name>
<feature type="signal peptide" evidence="1">
    <location>
        <begin position="1"/>
        <end position="25"/>
    </location>
</feature>
<feature type="chain" id="PRO_0000322009" description="Maltoporin 1">
    <location>
        <begin position="26"/>
        <end position="428"/>
    </location>
</feature>
<feature type="site" description="Greasy slide, important in sugar transport" evidence="1">
    <location>
        <position position="31"/>
    </location>
</feature>
<feature type="site" description="Greasy slide, important in sugar transport" evidence="1">
    <location>
        <position position="62"/>
    </location>
</feature>
<feature type="site" description="Greasy slide, important in sugar transport" evidence="1">
    <location>
        <position position="427"/>
    </location>
</feature>
<evidence type="ECO:0000255" key="1">
    <source>
        <dbReference type="HAMAP-Rule" id="MF_01301"/>
    </source>
</evidence>
<dbReference type="EMBL" id="CP000644">
    <property type="protein sequence ID" value="ABO90434.1"/>
    <property type="molecule type" value="Genomic_DNA"/>
</dbReference>
<dbReference type="SMR" id="A4SNG2"/>
<dbReference type="STRING" id="29491.GCA_000820065_01540"/>
<dbReference type="KEGG" id="asa:ASA_2388"/>
<dbReference type="eggNOG" id="COG4580">
    <property type="taxonomic scope" value="Bacteria"/>
</dbReference>
<dbReference type="HOGENOM" id="CLU_032473_4_1_6"/>
<dbReference type="Proteomes" id="UP000000225">
    <property type="component" value="Chromosome"/>
</dbReference>
<dbReference type="GO" id="GO:0009279">
    <property type="term" value="C:cell outer membrane"/>
    <property type="evidence" value="ECO:0007669"/>
    <property type="project" value="UniProtKB-SubCell"/>
</dbReference>
<dbReference type="GO" id="GO:0046930">
    <property type="term" value="C:pore complex"/>
    <property type="evidence" value="ECO:0007669"/>
    <property type="project" value="UniProtKB-KW"/>
</dbReference>
<dbReference type="GO" id="GO:0042958">
    <property type="term" value="F:maltodextrin transmembrane transporter activity"/>
    <property type="evidence" value="ECO:0007669"/>
    <property type="project" value="InterPro"/>
</dbReference>
<dbReference type="GO" id="GO:0015481">
    <property type="term" value="F:maltose transporting porin activity"/>
    <property type="evidence" value="ECO:0007669"/>
    <property type="project" value="InterPro"/>
</dbReference>
<dbReference type="GO" id="GO:0006811">
    <property type="term" value="P:monoatomic ion transport"/>
    <property type="evidence" value="ECO:0007669"/>
    <property type="project" value="UniProtKB-KW"/>
</dbReference>
<dbReference type="CDD" id="cd01346">
    <property type="entry name" value="Maltoporin-like"/>
    <property type="match status" value="1"/>
</dbReference>
<dbReference type="Gene3D" id="2.40.170.10">
    <property type="entry name" value="Porin, LamB type"/>
    <property type="match status" value="1"/>
</dbReference>
<dbReference type="HAMAP" id="MF_01301">
    <property type="entry name" value="LamB"/>
    <property type="match status" value="1"/>
</dbReference>
<dbReference type="InterPro" id="IPR050286">
    <property type="entry name" value="G_neg_Bact_CarbUptk_Porin"/>
</dbReference>
<dbReference type="InterPro" id="IPR023738">
    <property type="entry name" value="Maltoporin"/>
</dbReference>
<dbReference type="InterPro" id="IPR003192">
    <property type="entry name" value="Porin_LamB"/>
</dbReference>
<dbReference type="InterPro" id="IPR036998">
    <property type="entry name" value="Porin_LamB_sf"/>
</dbReference>
<dbReference type="NCBIfam" id="NF006860">
    <property type="entry name" value="PRK09360.1"/>
    <property type="match status" value="1"/>
</dbReference>
<dbReference type="PANTHER" id="PTHR38762">
    <property type="entry name" value="CRYPTIC OUTER MEMBRANE PORIN BGLH-RELATED"/>
    <property type="match status" value="1"/>
</dbReference>
<dbReference type="PANTHER" id="PTHR38762:SF1">
    <property type="entry name" value="CRYPTIC OUTER MEMBRANE PORIN BGLH-RELATED"/>
    <property type="match status" value="1"/>
</dbReference>
<dbReference type="Pfam" id="PF02264">
    <property type="entry name" value="LamB"/>
    <property type="match status" value="1"/>
</dbReference>
<dbReference type="SUPFAM" id="SSF56935">
    <property type="entry name" value="Porins"/>
    <property type="match status" value="1"/>
</dbReference>
<accession>A4SNG2</accession>
<protein>
    <recommendedName>
        <fullName evidence="1">Maltoporin 1</fullName>
    </recommendedName>
    <alternativeName>
        <fullName evidence="1">Maltose-inducible porin 1</fullName>
    </alternativeName>
</protein>
<organism>
    <name type="scientific">Aeromonas salmonicida (strain A449)</name>
    <dbReference type="NCBI Taxonomy" id="382245"/>
    <lineage>
        <taxon>Bacteria</taxon>
        <taxon>Pseudomonadati</taxon>
        <taxon>Pseudomonadota</taxon>
        <taxon>Gammaproteobacteria</taxon>
        <taxon>Aeromonadales</taxon>
        <taxon>Aeromonadaceae</taxon>
        <taxon>Aeromonas</taxon>
    </lineage>
</organism>
<sequence>MTMKVKLLTTSVALALSMTAFSSNAVDFSGYFRSGVGVSQDGDMQTGNQSLVGRLGNESDTYTEIGIGQEVYNKDGKVFYVDSMFSMQSNGSNDYESTATVCDFDKKQCSEDATFALRQFNVKAKGLISAAPDAVVWAGKRFYQRHDLHIIDTKYWNISGAGAGIENLKAGPGAFSLAWIRSDGNDIDNSIVDNDLNVNFLDLRYAGWAPWEGAWTEAGVSYAMPNPTDEQKATGGKYDPENGVMLTAEMSQYFAGSGINEKLVLQYANKGLAQNMISQGGGWYDVWQLTDDAKGYRVILTGDIPLGDKFSVNHVFTYGKGEKLQEWHDNTELFSAVARGGYAWTDIMKTLVEAGTYESTKTWTSGAEDKSSGQKYTLAQAWSAGPSMFARPEIRVFASYLKDGEGESFNGGEDDSTWNFGVQAEAWW</sequence>
<reference key="1">
    <citation type="journal article" date="2008" name="BMC Genomics">
        <title>The genome of Aeromonas salmonicida subsp. salmonicida A449: insights into the evolution of a fish pathogen.</title>
        <authorList>
            <person name="Reith M.E."/>
            <person name="Singh R.K."/>
            <person name="Curtis B."/>
            <person name="Boyd J.M."/>
            <person name="Bouevitch A."/>
            <person name="Kimball J."/>
            <person name="Munholland J."/>
            <person name="Murphy C."/>
            <person name="Sarty D."/>
            <person name="Williams J."/>
            <person name="Nash J.H."/>
            <person name="Johnson S.C."/>
            <person name="Brown L.L."/>
        </authorList>
    </citation>
    <scope>NUCLEOTIDE SEQUENCE [LARGE SCALE GENOMIC DNA]</scope>
    <source>
        <strain>A449</strain>
    </source>
</reference>
<gene>
    <name evidence="1" type="primary">lamB1</name>
    <name type="ordered locus">ASA_2388</name>
</gene>
<keyword id="KW-0998">Cell outer membrane</keyword>
<keyword id="KW-0406">Ion transport</keyword>
<keyword id="KW-0472">Membrane</keyword>
<keyword id="KW-0626">Porin</keyword>
<keyword id="KW-0732">Signal</keyword>
<keyword id="KW-0762">Sugar transport</keyword>
<keyword id="KW-0812">Transmembrane</keyword>
<keyword id="KW-1134">Transmembrane beta strand</keyword>
<keyword id="KW-0813">Transport</keyword>
<proteinExistence type="inferred from homology"/>
<comment type="function">
    <text evidence="1">Involved in the transport of maltose and maltodextrins.</text>
</comment>
<comment type="catalytic activity">
    <reaction evidence="1">
        <text>beta-maltose(in) = beta-maltose(out)</text>
        <dbReference type="Rhea" id="RHEA:29731"/>
        <dbReference type="ChEBI" id="CHEBI:18147"/>
    </reaction>
</comment>
<comment type="subunit">
    <text evidence="1">Homotrimer formed of three 18-stranded antiparallel beta-barrels, containing three independent channels.</text>
</comment>
<comment type="subcellular location">
    <subcellularLocation>
        <location evidence="1">Cell outer membrane</location>
        <topology evidence="1">Multi-pass membrane protein</topology>
    </subcellularLocation>
</comment>
<comment type="induction">
    <text evidence="1">By maltose.</text>
</comment>
<comment type="similarity">
    <text evidence="1">Belongs to the porin LamB (TC 1.B.3) family.</text>
</comment>